<gene>
    <name type="primary">norB</name>
    <name type="ordered locus">MW1325</name>
</gene>
<organism>
    <name type="scientific">Staphylococcus aureus (strain MW2)</name>
    <dbReference type="NCBI Taxonomy" id="196620"/>
    <lineage>
        <taxon>Bacteria</taxon>
        <taxon>Bacillati</taxon>
        <taxon>Bacillota</taxon>
        <taxon>Bacilli</taxon>
        <taxon>Bacillales</taxon>
        <taxon>Staphylococcaceae</taxon>
        <taxon>Staphylococcus</taxon>
    </lineage>
</organism>
<sequence length="463" mass="49245">MEKPSREAFEGNNKLLIGIVLSVITFWLFAQSLVNVVPILEDSFNTDIGTVNIAVSITALFSGMFVVGAGGLADKYGRIKLTNIGIILNILGSLLIIISNIPLLLIIGRLIQGLSAACIMPATLSIIKSYYIGKDRQRALSYWSIGSWGGSGVCSFFGGAVATLLGWRWIFILSIIISLIALFLIKGTPETKSKSISLNKFDIKGLVLLVIMLLSLNILITKGSELGVSSLLFITLLAIAIGSFSLFIVLEKRATNPLIDFKLFKNKAYTGATASNFLLNGVAGTLIVANTFVQRGLGYSSLQAGSLSITYLVMVLIMIRVGEKLLQTLGCKKPMLIGTGVLIVGECLISLTFLPEILYVICCIIGYLFFGLGLGIYATPSTDTAIANAPLEKVGVAAGIYKMASALGGAFGVALSGAVYAIVSNMTNIYTGAMIALWLNAGMGILSFVIILLLVPKQNDTQL</sequence>
<protein>
    <recommendedName>
        <fullName>Quinolone resistance protein NorB</fullName>
    </recommendedName>
</protein>
<name>NORB_STAAW</name>
<reference key="1">
    <citation type="journal article" date="2002" name="Lancet">
        <title>Genome and virulence determinants of high virulence community-acquired MRSA.</title>
        <authorList>
            <person name="Baba T."/>
            <person name="Takeuchi F."/>
            <person name="Kuroda M."/>
            <person name="Yuzawa H."/>
            <person name="Aoki K."/>
            <person name="Oguchi A."/>
            <person name="Nagai Y."/>
            <person name="Iwama N."/>
            <person name="Asano K."/>
            <person name="Naimi T."/>
            <person name="Kuroda H."/>
            <person name="Cui L."/>
            <person name="Yamamoto K."/>
            <person name="Hiramatsu K."/>
        </authorList>
    </citation>
    <scope>NUCLEOTIDE SEQUENCE [LARGE SCALE GENOMIC DNA]</scope>
    <source>
        <strain>MW2</strain>
    </source>
</reference>
<reference key="2">
    <citation type="journal article" date="2008" name="J. Bacteriol.">
        <title>NorB, an efflux pump in Staphylococcus aureus strain MW2, contributes to bacterial fitness in abscesses.</title>
        <authorList>
            <person name="Ding Y."/>
            <person name="Onodera Y."/>
            <person name="Lee J.C."/>
            <person name="Hooper D.C."/>
        </authorList>
    </citation>
    <scope>FUNCTION IN BACTERIAL SURVIVAL WITHIN AN ABSCESS</scope>
    <scope>INDUCTION</scope>
</reference>
<keyword id="KW-0046">Antibiotic resistance</keyword>
<keyword id="KW-1003">Cell membrane</keyword>
<keyword id="KW-0472">Membrane</keyword>
<keyword id="KW-0812">Transmembrane</keyword>
<keyword id="KW-1133">Transmembrane helix</keyword>
<keyword id="KW-0813">Transport</keyword>
<keyword id="KW-0843">Virulence</keyword>
<proteinExistence type="evidence at protein level"/>
<evidence type="ECO:0000250" key="1"/>
<evidence type="ECO:0000255" key="2"/>
<evidence type="ECO:0000269" key="3">
    <source>
    </source>
</evidence>
<evidence type="ECO:0000305" key="4"/>
<accession>Q8NWQ5</accession>
<feature type="chain" id="PRO_0000361962" description="Quinolone resistance protein NorB">
    <location>
        <begin position="1"/>
        <end position="463"/>
    </location>
</feature>
<feature type="transmembrane region" description="Helical" evidence="2">
    <location>
        <begin position="17"/>
        <end position="37"/>
    </location>
</feature>
<feature type="transmembrane region" description="Helical" evidence="2">
    <location>
        <begin position="53"/>
        <end position="73"/>
    </location>
</feature>
<feature type="transmembrane region" description="Helical" evidence="2">
    <location>
        <begin position="86"/>
        <end position="106"/>
    </location>
</feature>
<feature type="transmembrane region" description="Helical" evidence="2">
    <location>
        <begin position="107"/>
        <end position="127"/>
    </location>
</feature>
<feature type="transmembrane region" description="Helical" evidence="2">
    <location>
        <begin position="142"/>
        <end position="162"/>
    </location>
</feature>
<feature type="transmembrane region" description="Helical" evidence="2">
    <location>
        <begin position="165"/>
        <end position="185"/>
    </location>
</feature>
<feature type="transmembrane region" description="Helical" evidence="2">
    <location>
        <begin position="201"/>
        <end position="221"/>
    </location>
</feature>
<feature type="transmembrane region" description="Helical" evidence="2">
    <location>
        <begin position="230"/>
        <end position="250"/>
    </location>
</feature>
<feature type="transmembrane region" description="Helical" evidence="2">
    <location>
        <begin position="273"/>
        <end position="293"/>
    </location>
</feature>
<feature type="transmembrane region" description="Helical" evidence="2">
    <location>
        <begin position="299"/>
        <end position="319"/>
    </location>
</feature>
<feature type="transmembrane region" description="Helical" evidence="2">
    <location>
        <begin position="334"/>
        <end position="354"/>
    </location>
</feature>
<feature type="transmembrane region" description="Helical" evidence="2">
    <location>
        <begin position="357"/>
        <end position="377"/>
    </location>
</feature>
<feature type="transmembrane region" description="Helical" evidence="2">
    <location>
        <begin position="403"/>
        <end position="423"/>
    </location>
</feature>
<feature type="transmembrane region" description="Helical" evidence="2">
    <location>
        <begin position="435"/>
        <end position="455"/>
    </location>
</feature>
<comment type="function">
    <text evidence="1 3">Multidrug efflux pump that acts independently of NorA and is one of the factors that confers resistance against diverse quinolones and chemical compounds (By similarity). Can facilitate bacterial survival in vivo when overexpressed in an abscess and may contribute to the relative resistance of staphylococcal abscesses to antimicrobial therapy.</text>
</comment>
<comment type="subcellular location">
    <subcellularLocation>
        <location evidence="4">Cell membrane</location>
        <topology evidence="4">Multi-pass membrane protein</topology>
    </subcellularLocation>
</comment>
<comment type="induction">
    <text evidence="3">Transcription is highly induced in abscesses. Up-regulated by MgrA. Down-regulated during stationary-phase.</text>
</comment>
<comment type="similarity">
    <text evidence="4">Belongs to the major facilitator superfamily. TCR/Tet family.</text>
</comment>
<dbReference type="EMBL" id="BA000033">
    <property type="protein sequence ID" value="BAB95190.1"/>
    <property type="molecule type" value="Genomic_DNA"/>
</dbReference>
<dbReference type="RefSeq" id="WP_000414682.1">
    <property type="nucleotide sequence ID" value="NC_003923.1"/>
</dbReference>
<dbReference type="SMR" id="Q8NWQ5"/>
<dbReference type="KEGG" id="sam:MW1325"/>
<dbReference type="HOGENOM" id="CLU_000960_28_3_9"/>
<dbReference type="GO" id="GO:0005886">
    <property type="term" value="C:plasma membrane"/>
    <property type="evidence" value="ECO:0007669"/>
    <property type="project" value="UniProtKB-SubCell"/>
</dbReference>
<dbReference type="GO" id="GO:0022857">
    <property type="term" value="F:transmembrane transporter activity"/>
    <property type="evidence" value="ECO:0007669"/>
    <property type="project" value="InterPro"/>
</dbReference>
<dbReference type="GO" id="GO:0046677">
    <property type="term" value="P:response to antibiotic"/>
    <property type="evidence" value="ECO:0007669"/>
    <property type="project" value="UniProtKB-KW"/>
</dbReference>
<dbReference type="CDD" id="cd17321">
    <property type="entry name" value="MFS_MMR_MDR_like"/>
    <property type="match status" value="1"/>
</dbReference>
<dbReference type="FunFam" id="1.20.1250.20:FF:000252">
    <property type="entry name" value="Quinolone resistance protein NorB"/>
    <property type="match status" value="1"/>
</dbReference>
<dbReference type="FunFam" id="1.20.1720.10:FF:000015">
    <property type="entry name" value="Quinolone resistance protein NorB"/>
    <property type="match status" value="1"/>
</dbReference>
<dbReference type="Gene3D" id="1.20.1250.20">
    <property type="entry name" value="MFS general substrate transporter like domains"/>
    <property type="match status" value="1"/>
</dbReference>
<dbReference type="Gene3D" id="1.20.1720.10">
    <property type="entry name" value="Multidrug resistance protein D"/>
    <property type="match status" value="1"/>
</dbReference>
<dbReference type="InterPro" id="IPR011701">
    <property type="entry name" value="MFS"/>
</dbReference>
<dbReference type="InterPro" id="IPR020846">
    <property type="entry name" value="MFS_dom"/>
</dbReference>
<dbReference type="InterPro" id="IPR036259">
    <property type="entry name" value="MFS_trans_sf"/>
</dbReference>
<dbReference type="PANTHER" id="PTHR42718">
    <property type="entry name" value="MAJOR FACILITATOR SUPERFAMILY MULTIDRUG TRANSPORTER MFSC"/>
    <property type="match status" value="1"/>
</dbReference>
<dbReference type="PANTHER" id="PTHR42718:SF9">
    <property type="entry name" value="MAJOR FACILITATOR SUPERFAMILY MULTIDRUG TRANSPORTER MFSC"/>
    <property type="match status" value="1"/>
</dbReference>
<dbReference type="Pfam" id="PF07690">
    <property type="entry name" value="MFS_1"/>
    <property type="match status" value="1"/>
</dbReference>
<dbReference type="SUPFAM" id="SSF103473">
    <property type="entry name" value="MFS general substrate transporter"/>
    <property type="match status" value="1"/>
</dbReference>
<dbReference type="PROSITE" id="PS50850">
    <property type="entry name" value="MFS"/>
    <property type="match status" value="1"/>
</dbReference>